<proteinExistence type="inferred from homology"/>
<comment type="function">
    <text evidence="1">Oxidative deamination of D-amino acids.</text>
</comment>
<comment type="catalytic activity">
    <reaction evidence="1">
        <text>a D-alpha-amino acid + A + H2O = a 2-oxocarboxylate + AH2 + NH4(+)</text>
        <dbReference type="Rhea" id="RHEA:18125"/>
        <dbReference type="ChEBI" id="CHEBI:13193"/>
        <dbReference type="ChEBI" id="CHEBI:15377"/>
        <dbReference type="ChEBI" id="CHEBI:17499"/>
        <dbReference type="ChEBI" id="CHEBI:28938"/>
        <dbReference type="ChEBI" id="CHEBI:35179"/>
        <dbReference type="ChEBI" id="CHEBI:59871"/>
    </reaction>
</comment>
<comment type="cofactor">
    <cofactor evidence="1">
        <name>FAD</name>
        <dbReference type="ChEBI" id="CHEBI:57692"/>
    </cofactor>
</comment>
<comment type="pathway">
    <text>Amino-acid degradation; D-alanine degradation; NH(3) and pyruvate from D-alanine: step 1/1.</text>
</comment>
<comment type="similarity">
    <text evidence="1">Belongs to the DadA oxidoreductase family.</text>
</comment>
<gene>
    <name evidence="1" type="primary">dadA</name>
    <name type="ordered locus">Bcep18194_A4178</name>
</gene>
<dbReference type="EC" id="1.4.99.-" evidence="1"/>
<dbReference type="EMBL" id="CP000151">
    <property type="protein sequence ID" value="ABB07775.1"/>
    <property type="molecule type" value="Genomic_DNA"/>
</dbReference>
<dbReference type="RefSeq" id="WP_011351352.1">
    <property type="nucleotide sequence ID" value="NZ_WNDV01000026.1"/>
</dbReference>
<dbReference type="SMR" id="Q39IE1"/>
<dbReference type="GeneID" id="45094077"/>
<dbReference type="KEGG" id="bur:Bcep18194_A4178"/>
<dbReference type="PATRIC" id="fig|482957.22.peg.1065"/>
<dbReference type="HOGENOM" id="CLU_007884_9_2_4"/>
<dbReference type="UniPathway" id="UPA00043">
    <property type="reaction ID" value="UER00498"/>
</dbReference>
<dbReference type="Proteomes" id="UP000002705">
    <property type="component" value="Chromosome 1"/>
</dbReference>
<dbReference type="GO" id="GO:0005737">
    <property type="term" value="C:cytoplasm"/>
    <property type="evidence" value="ECO:0007669"/>
    <property type="project" value="TreeGrafter"/>
</dbReference>
<dbReference type="GO" id="GO:0005886">
    <property type="term" value="C:plasma membrane"/>
    <property type="evidence" value="ECO:0007669"/>
    <property type="project" value="TreeGrafter"/>
</dbReference>
<dbReference type="GO" id="GO:0008718">
    <property type="term" value="F:D-amino-acid dehydrogenase activity"/>
    <property type="evidence" value="ECO:0007669"/>
    <property type="project" value="UniProtKB-UniRule"/>
</dbReference>
<dbReference type="GO" id="GO:0055130">
    <property type="term" value="P:D-alanine catabolic process"/>
    <property type="evidence" value="ECO:0007669"/>
    <property type="project" value="UniProtKB-UniPathway"/>
</dbReference>
<dbReference type="FunFam" id="3.50.50.60:FF:000020">
    <property type="entry name" value="D-amino acid dehydrogenase"/>
    <property type="match status" value="1"/>
</dbReference>
<dbReference type="Gene3D" id="3.30.9.10">
    <property type="entry name" value="D-Amino Acid Oxidase, subunit A, domain 2"/>
    <property type="match status" value="1"/>
</dbReference>
<dbReference type="Gene3D" id="3.50.50.60">
    <property type="entry name" value="FAD/NAD(P)-binding domain"/>
    <property type="match status" value="2"/>
</dbReference>
<dbReference type="HAMAP" id="MF_01202">
    <property type="entry name" value="DadA"/>
    <property type="match status" value="1"/>
</dbReference>
<dbReference type="InterPro" id="IPR023080">
    <property type="entry name" value="DadA"/>
</dbReference>
<dbReference type="InterPro" id="IPR006076">
    <property type="entry name" value="FAD-dep_OxRdtase"/>
</dbReference>
<dbReference type="InterPro" id="IPR036188">
    <property type="entry name" value="FAD/NAD-bd_sf"/>
</dbReference>
<dbReference type="NCBIfam" id="NF001933">
    <property type="entry name" value="PRK00711.1"/>
    <property type="match status" value="1"/>
</dbReference>
<dbReference type="PANTHER" id="PTHR13847:SF280">
    <property type="entry name" value="D-AMINO ACID DEHYDROGENASE"/>
    <property type="match status" value="1"/>
</dbReference>
<dbReference type="PANTHER" id="PTHR13847">
    <property type="entry name" value="SARCOSINE DEHYDROGENASE-RELATED"/>
    <property type="match status" value="1"/>
</dbReference>
<dbReference type="Pfam" id="PF01266">
    <property type="entry name" value="DAO"/>
    <property type="match status" value="1"/>
</dbReference>
<dbReference type="SUPFAM" id="SSF54373">
    <property type="entry name" value="FAD-linked reductases, C-terminal domain"/>
    <property type="match status" value="1"/>
</dbReference>
<dbReference type="SUPFAM" id="SSF51905">
    <property type="entry name" value="FAD/NAD(P)-binding domain"/>
    <property type="match status" value="1"/>
</dbReference>
<organism>
    <name type="scientific">Burkholderia lata (strain ATCC 17760 / DSM 23089 / LMG 22485 / NCIMB 9086 / R18194 / 383)</name>
    <dbReference type="NCBI Taxonomy" id="482957"/>
    <lineage>
        <taxon>Bacteria</taxon>
        <taxon>Pseudomonadati</taxon>
        <taxon>Pseudomonadota</taxon>
        <taxon>Betaproteobacteria</taxon>
        <taxon>Burkholderiales</taxon>
        <taxon>Burkholderiaceae</taxon>
        <taxon>Burkholderia</taxon>
        <taxon>Burkholderia cepacia complex</taxon>
    </lineage>
</organism>
<evidence type="ECO:0000255" key="1">
    <source>
        <dbReference type="HAMAP-Rule" id="MF_01202"/>
    </source>
</evidence>
<feature type="chain" id="PRO_1000066083" description="D-amino acid dehydrogenase">
    <location>
        <begin position="1"/>
        <end position="428"/>
    </location>
</feature>
<feature type="binding site" evidence="1">
    <location>
        <begin position="3"/>
        <end position="17"/>
    </location>
    <ligand>
        <name>FAD</name>
        <dbReference type="ChEBI" id="CHEBI:57692"/>
    </ligand>
</feature>
<name>DADA_BURL3</name>
<keyword id="KW-0274">FAD</keyword>
<keyword id="KW-0285">Flavoprotein</keyword>
<keyword id="KW-0560">Oxidoreductase</keyword>
<sequence>MRVVILGSGVVGVASAYYLARAGHEVTVIDREAGPALETSFANAGQISPGYAAPWAAPGVPLKAVKWMFEKHAPLAIRLDGTRFQLQWMYQMLRNCTAERYAVNKGRMVRLAEYSRDCLQALRADTGIQYEGRTGGTLQLFRTQQQLDGAAKDIAVLQEANVPFELLSPADLKKAEPALAAVSHKLTGGLRLPGDETGDCQLFTTRLAALAESLGVKFRYNTPIDALAIAGGKIAGVQCGSETVRADAYVVALGSYSTSFISNLMKIPVYPLKGYSITAPIVNEAAAPVSTVLDETYKIAITRFDQRIRVGGMAEIVGFDKKLRAARRETLEMCVNDLFPGGGDTSKATFWTGLRPMTPDGTPIVGRTPVSNLFLNTGHGTLGWTMSCGSGQLLADLISGKMPAIQADDLSVHRYLKDVAGQTRPAYA</sequence>
<protein>
    <recommendedName>
        <fullName evidence="1">D-amino acid dehydrogenase</fullName>
        <ecNumber evidence="1">1.4.99.-</ecNumber>
    </recommendedName>
</protein>
<accession>Q39IE1</accession>
<reference key="1">
    <citation type="submission" date="2005-10" db="EMBL/GenBank/DDBJ databases">
        <title>Complete sequence of chromosome 1 of Burkholderia sp. 383.</title>
        <authorList>
            <consortium name="US DOE Joint Genome Institute"/>
            <person name="Copeland A."/>
            <person name="Lucas S."/>
            <person name="Lapidus A."/>
            <person name="Barry K."/>
            <person name="Detter J.C."/>
            <person name="Glavina T."/>
            <person name="Hammon N."/>
            <person name="Israni S."/>
            <person name="Pitluck S."/>
            <person name="Chain P."/>
            <person name="Malfatti S."/>
            <person name="Shin M."/>
            <person name="Vergez L."/>
            <person name="Schmutz J."/>
            <person name="Larimer F."/>
            <person name="Land M."/>
            <person name="Kyrpides N."/>
            <person name="Lykidis A."/>
            <person name="Richardson P."/>
        </authorList>
    </citation>
    <scope>NUCLEOTIDE SEQUENCE [LARGE SCALE GENOMIC DNA]</scope>
    <source>
        <strain>ATCC 17760 / DSM 23089 / LMG 22485 / NCIMB 9086 / R18194 / 383</strain>
    </source>
</reference>